<gene>
    <name type="ordered locus">Pnuc_0701</name>
</gene>
<feature type="chain" id="PRO_1000114632" description="Nucleoid-associated protein Pnuc_0701">
    <location>
        <begin position="1"/>
        <end position="107"/>
    </location>
</feature>
<keyword id="KW-0963">Cytoplasm</keyword>
<keyword id="KW-0238">DNA-binding</keyword>
<keyword id="KW-1185">Reference proteome</keyword>
<accession>A4SWQ5</accession>
<dbReference type="EMBL" id="CP000655">
    <property type="protein sequence ID" value="ABP33919.1"/>
    <property type="molecule type" value="Genomic_DNA"/>
</dbReference>
<dbReference type="RefSeq" id="WP_011902544.1">
    <property type="nucleotide sequence ID" value="NC_009379.1"/>
</dbReference>
<dbReference type="SMR" id="A4SWQ5"/>
<dbReference type="GeneID" id="31481061"/>
<dbReference type="KEGG" id="pnu:Pnuc_0701"/>
<dbReference type="eggNOG" id="COG0718">
    <property type="taxonomic scope" value="Bacteria"/>
</dbReference>
<dbReference type="HOGENOM" id="CLU_140930_0_0_4"/>
<dbReference type="Proteomes" id="UP000000231">
    <property type="component" value="Chromosome"/>
</dbReference>
<dbReference type="GO" id="GO:0043590">
    <property type="term" value="C:bacterial nucleoid"/>
    <property type="evidence" value="ECO:0007669"/>
    <property type="project" value="UniProtKB-UniRule"/>
</dbReference>
<dbReference type="GO" id="GO:0005829">
    <property type="term" value="C:cytosol"/>
    <property type="evidence" value="ECO:0007669"/>
    <property type="project" value="TreeGrafter"/>
</dbReference>
<dbReference type="GO" id="GO:0003677">
    <property type="term" value="F:DNA binding"/>
    <property type="evidence" value="ECO:0007669"/>
    <property type="project" value="UniProtKB-UniRule"/>
</dbReference>
<dbReference type="Gene3D" id="3.30.1310.10">
    <property type="entry name" value="Nucleoid-associated protein YbaB-like domain"/>
    <property type="match status" value="1"/>
</dbReference>
<dbReference type="HAMAP" id="MF_00274">
    <property type="entry name" value="DNA_YbaB_EbfC"/>
    <property type="match status" value="1"/>
</dbReference>
<dbReference type="InterPro" id="IPR036894">
    <property type="entry name" value="YbaB-like_sf"/>
</dbReference>
<dbReference type="InterPro" id="IPR004401">
    <property type="entry name" value="YbaB/EbfC"/>
</dbReference>
<dbReference type="NCBIfam" id="TIGR00103">
    <property type="entry name" value="DNA_YbaB_EbfC"/>
    <property type="match status" value="1"/>
</dbReference>
<dbReference type="PANTHER" id="PTHR33449">
    <property type="entry name" value="NUCLEOID-ASSOCIATED PROTEIN YBAB"/>
    <property type="match status" value="1"/>
</dbReference>
<dbReference type="PANTHER" id="PTHR33449:SF1">
    <property type="entry name" value="NUCLEOID-ASSOCIATED PROTEIN YBAB"/>
    <property type="match status" value="1"/>
</dbReference>
<dbReference type="Pfam" id="PF02575">
    <property type="entry name" value="YbaB_DNA_bd"/>
    <property type="match status" value="1"/>
</dbReference>
<dbReference type="PIRSF" id="PIRSF004555">
    <property type="entry name" value="UCP004555"/>
    <property type="match status" value="1"/>
</dbReference>
<dbReference type="SUPFAM" id="SSF82607">
    <property type="entry name" value="YbaB-like"/>
    <property type="match status" value="1"/>
</dbReference>
<name>Y701_POLAQ</name>
<sequence length="107" mass="11407">MMKGGLAGLMKQAQQMQEKMKTAQAELAALEVNGQAAGGLVKVAISGKYELKRVQIDPGAMDDREMLEDLIVTAYTEAFKQVEAASTQLMSGATAGMPMPPGFKLPF</sequence>
<evidence type="ECO:0000255" key="1">
    <source>
        <dbReference type="HAMAP-Rule" id="MF_00274"/>
    </source>
</evidence>
<reference key="1">
    <citation type="journal article" date="2012" name="Stand. Genomic Sci.">
        <title>Complete genome sequence of Polynucleobacter necessarius subsp. asymbioticus type strain (QLW-P1DMWA-1(T)).</title>
        <authorList>
            <person name="Meincke L."/>
            <person name="Copeland A."/>
            <person name="Lapidus A."/>
            <person name="Lucas S."/>
            <person name="Berry K.W."/>
            <person name="Del Rio T.G."/>
            <person name="Hammon N."/>
            <person name="Dalin E."/>
            <person name="Tice H."/>
            <person name="Pitluck S."/>
            <person name="Richardson P."/>
            <person name="Bruce D."/>
            <person name="Goodwin L."/>
            <person name="Han C."/>
            <person name="Tapia R."/>
            <person name="Detter J.C."/>
            <person name="Schmutz J."/>
            <person name="Brettin T."/>
            <person name="Larimer F."/>
            <person name="Land M."/>
            <person name="Hauser L."/>
            <person name="Kyrpides N.C."/>
            <person name="Ivanova N."/>
            <person name="Goker M."/>
            <person name="Woyke T."/>
            <person name="Wu Q.L."/>
            <person name="Pockl M."/>
            <person name="Hahn M.W."/>
            <person name="Klenk H.P."/>
        </authorList>
    </citation>
    <scope>NUCLEOTIDE SEQUENCE [LARGE SCALE GENOMIC DNA]</scope>
    <source>
        <strain>DSM 18221 / CIP 109841 / QLW-P1DMWA-1</strain>
    </source>
</reference>
<protein>
    <recommendedName>
        <fullName evidence="1">Nucleoid-associated protein Pnuc_0701</fullName>
    </recommendedName>
</protein>
<proteinExistence type="inferred from homology"/>
<comment type="function">
    <text evidence="1">Binds to DNA and alters its conformation. May be involved in regulation of gene expression, nucleoid organization and DNA protection.</text>
</comment>
<comment type="subunit">
    <text evidence="1">Homodimer.</text>
</comment>
<comment type="subcellular location">
    <subcellularLocation>
        <location evidence="1">Cytoplasm</location>
        <location evidence="1">Nucleoid</location>
    </subcellularLocation>
</comment>
<comment type="similarity">
    <text evidence="1">Belongs to the YbaB/EbfC family.</text>
</comment>
<organism>
    <name type="scientific">Polynucleobacter asymbioticus (strain DSM 18221 / CIP 109841 / QLW-P1DMWA-1)</name>
    <name type="common">Polynucleobacter necessarius subsp. asymbioticus</name>
    <dbReference type="NCBI Taxonomy" id="312153"/>
    <lineage>
        <taxon>Bacteria</taxon>
        <taxon>Pseudomonadati</taxon>
        <taxon>Pseudomonadota</taxon>
        <taxon>Betaproteobacteria</taxon>
        <taxon>Burkholderiales</taxon>
        <taxon>Burkholderiaceae</taxon>
        <taxon>Polynucleobacter</taxon>
    </lineage>
</organism>